<proteinExistence type="inferred from homology"/>
<feature type="chain" id="PRO_1000025207" description="Co-chaperonin GroES">
    <location>
        <begin position="1"/>
        <end position="96"/>
    </location>
</feature>
<organism>
    <name type="scientific">Aromatoleum aromaticum (strain DSM 19018 / LMG 30748 / EbN1)</name>
    <name type="common">Azoarcus sp. (strain EbN1)</name>
    <dbReference type="NCBI Taxonomy" id="76114"/>
    <lineage>
        <taxon>Bacteria</taxon>
        <taxon>Pseudomonadati</taxon>
        <taxon>Pseudomonadota</taxon>
        <taxon>Betaproteobacteria</taxon>
        <taxon>Rhodocyclales</taxon>
        <taxon>Rhodocyclaceae</taxon>
        <taxon>Aromatoleum</taxon>
    </lineage>
</organism>
<name>CH10_AROAE</name>
<reference key="1">
    <citation type="journal article" date="2005" name="Arch. Microbiol.">
        <title>The genome sequence of an anaerobic aromatic-degrading denitrifying bacterium, strain EbN1.</title>
        <authorList>
            <person name="Rabus R."/>
            <person name="Kube M."/>
            <person name="Heider J."/>
            <person name="Beck A."/>
            <person name="Heitmann K."/>
            <person name="Widdel F."/>
            <person name="Reinhardt R."/>
        </authorList>
    </citation>
    <scope>NUCLEOTIDE SEQUENCE [LARGE SCALE GENOMIC DNA]</scope>
    <source>
        <strain>DSM 19018 / LMG 30748 / EbN1</strain>
    </source>
</reference>
<sequence>MKIRPLHDRVIVKRLEAERKTASGIVIPDSAGEKPDQGEVLAVGNGKILDDGKVRPMAVKVGDKVLFGKYAGQTVKVEGDELLVMREEDIMGVVEA</sequence>
<dbReference type="EMBL" id="CR555306">
    <property type="protein sequence ID" value="CAI06750.1"/>
    <property type="molecule type" value="Genomic_DNA"/>
</dbReference>
<dbReference type="RefSeq" id="WP_004311482.1">
    <property type="nucleotide sequence ID" value="NC_006513.1"/>
</dbReference>
<dbReference type="SMR" id="Q5P7G1"/>
<dbReference type="STRING" id="76114.ebB35"/>
<dbReference type="KEGG" id="eba:ebB35"/>
<dbReference type="eggNOG" id="COG0234">
    <property type="taxonomic scope" value="Bacteria"/>
</dbReference>
<dbReference type="HOGENOM" id="CLU_132825_2_0_4"/>
<dbReference type="OrthoDB" id="9806791at2"/>
<dbReference type="Proteomes" id="UP000006552">
    <property type="component" value="Chromosome"/>
</dbReference>
<dbReference type="GO" id="GO:0005737">
    <property type="term" value="C:cytoplasm"/>
    <property type="evidence" value="ECO:0007669"/>
    <property type="project" value="UniProtKB-SubCell"/>
</dbReference>
<dbReference type="GO" id="GO:0005524">
    <property type="term" value="F:ATP binding"/>
    <property type="evidence" value="ECO:0007669"/>
    <property type="project" value="InterPro"/>
</dbReference>
<dbReference type="GO" id="GO:0046872">
    <property type="term" value="F:metal ion binding"/>
    <property type="evidence" value="ECO:0007669"/>
    <property type="project" value="TreeGrafter"/>
</dbReference>
<dbReference type="GO" id="GO:0044183">
    <property type="term" value="F:protein folding chaperone"/>
    <property type="evidence" value="ECO:0007669"/>
    <property type="project" value="InterPro"/>
</dbReference>
<dbReference type="GO" id="GO:0051087">
    <property type="term" value="F:protein-folding chaperone binding"/>
    <property type="evidence" value="ECO:0007669"/>
    <property type="project" value="TreeGrafter"/>
</dbReference>
<dbReference type="GO" id="GO:0051082">
    <property type="term" value="F:unfolded protein binding"/>
    <property type="evidence" value="ECO:0007669"/>
    <property type="project" value="TreeGrafter"/>
</dbReference>
<dbReference type="GO" id="GO:0051085">
    <property type="term" value="P:chaperone cofactor-dependent protein refolding"/>
    <property type="evidence" value="ECO:0007669"/>
    <property type="project" value="TreeGrafter"/>
</dbReference>
<dbReference type="CDD" id="cd00320">
    <property type="entry name" value="cpn10"/>
    <property type="match status" value="1"/>
</dbReference>
<dbReference type="FunFam" id="2.30.33.40:FF:000001">
    <property type="entry name" value="10 kDa chaperonin"/>
    <property type="match status" value="1"/>
</dbReference>
<dbReference type="Gene3D" id="2.30.33.40">
    <property type="entry name" value="GroES chaperonin"/>
    <property type="match status" value="1"/>
</dbReference>
<dbReference type="HAMAP" id="MF_00580">
    <property type="entry name" value="CH10"/>
    <property type="match status" value="1"/>
</dbReference>
<dbReference type="InterPro" id="IPR020818">
    <property type="entry name" value="Chaperonin_GroES"/>
</dbReference>
<dbReference type="InterPro" id="IPR037124">
    <property type="entry name" value="Chaperonin_GroES_sf"/>
</dbReference>
<dbReference type="InterPro" id="IPR018369">
    <property type="entry name" value="Chaprnonin_Cpn10_CS"/>
</dbReference>
<dbReference type="InterPro" id="IPR011032">
    <property type="entry name" value="GroES-like_sf"/>
</dbReference>
<dbReference type="NCBIfam" id="NF001527">
    <property type="entry name" value="PRK00364.1-2"/>
    <property type="match status" value="1"/>
</dbReference>
<dbReference type="NCBIfam" id="NF001529">
    <property type="entry name" value="PRK00364.1-5"/>
    <property type="match status" value="1"/>
</dbReference>
<dbReference type="NCBIfam" id="NF001531">
    <property type="entry name" value="PRK00364.2-2"/>
    <property type="match status" value="1"/>
</dbReference>
<dbReference type="NCBIfam" id="NF001533">
    <property type="entry name" value="PRK00364.2-4"/>
    <property type="match status" value="1"/>
</dbReference>
<dbReference type="NCBIfam" id="NF001534">
    <property type="entry name" value="PRK00364.2-5"/>
    <property type="match status" value="1"/>
</dbReference>
<dbReference type="PANTHER" id="PTHR10772">
    <property type="entry name" value="10 KDA HEAT SHOCK PROTEIN"/>
    <property type="match status" value="1"/>
</dbReference>
<dbReference type="PANTHER" id="PTHR10772:SF58">
    <property type="entry name" value="CO-CHAPERONIN GROES"/>
    <property type="match status" value="1"/>
</dbReference>
<dbReference type="Pfam" id="PF00166">
    <property type="entry name" value="Cpn10"/>
    <property type="match status" value="1"/>
</dbReference>
<dbReference type="PRINTS" id="PR00297">
    <property type="entry name" value="CHAPERONIN10"/>
</dbReference>
<dbReference type="SMART" id="SM00883">
    <property type="entry name" value="Cpn10"/>
    <property type="match status" value="1"/>
</dbReference>
<dbReference type="SUPFAM" id="SSF50129">
    <property type="entry name" value="GroES-like"/>
    <property type="match status" value="1"/>
</dbReference>
<dbReference type="PROSITE" id="PS00681">
    <property type="entry name" value="CHAPERONINS_CPN10"/>
    <property type="match status" value="1"/>
</dbReference>
<evidence type="ECO:0000255" key="1">
    <source>
        <dbReference type="HAMAP-Rule" id="MF_00580"/>
    </source>
</evidence>
<accession>Q5P7G1</accession>
<protein>
    <recommendedName>
        <fullName evidence="1">Co-chaperonin GroES</fullName>
    </recommendedName>
    <alternativeName>
        <fullName evidence="1">10 kDa chaperonin</fullName>
    </alternativeName>
    <alternativeName>
        <fullName evidence="1">Chaperonin-10</fullName>
        <shortName evidence="1">Cpn10</shortName>
    </alternativeName>
</protein>
<gene>
    <name evidence="1" type="primary">groES</name>
    <name evidence="1" type="synonym">groS</name>
    <name type="ordered locus">AZOSEA06280</name>
    <name type="ORF">ebB35</name>
</gene>
<comment type="function">
    <text evidence="1">Together with the chaperonin GroEL, plays an essential role in assisting protein folding. The GroEL-GroES system forms a nano-cage that allows encapsulation of the non-native substrate proteins and provides a physical environment optimized to promote and accelerate protein folding. GroES binds to the apical surface of the GroEL ring, thereby capping the opening of the GroEL channel.</text>
</comment>
<comment type="subunit">
    <text evidence="1">Heptamer of 7 subunits arranged in a ring. Interacts with the chaperonin GroEL.</text>
</comment>
<comment type="subcellular location">
    <subcellularLocation>
        <location evidence="1">Cytoplasm</location>
    </subcellularLocation>
</comment>
<comment type="similarity">
    <text evidence="1">Belongs to the GroES chaperonin family.</text>
</comment>
<keyword id="KW-0143">Chaperone</keyword>
<keyword id="KW-0963">Cytoplasm</keyword>
<keyword id="KW-1185">Reference proteome</keyword>